<keyword id="KW-0066">ATP synthesis</keyword>
<keyword id="KW-0139">CF(1)</keyword>
<keyword id="KW-0375">Hydrogen ion transport</keyword>
<keyword id="KW-0406">Ion transport</keyword>
<keyword id="KW-0472">Membrane</keyword>
<keyword id="KW-1185">Reference proteome</keyword>
<keyword id="KW-0793">Thylakoid</keyword>
<keyword id="KW-0813">Transport</keyword>
<name>ATPG_SYNS9</name>
<sequence>MANLKDIRDRIKSVKNTRKITEAMRLVAAAKVRRAQEQVLRSRPFADRLSRILENLQSRMRFEEADAPLMEQRTVETITLVAITGDRGLCGGYNANIIKRTEQRFAELKGKGFNVKLVVIGSKAISYFSNRDYPIQAKITGLEQVPTADEANTIATDMLAEFMAAGTDRVEMVFTKFINLVSCKPVLQTLLPLDPQDIADPEDEIFNLTTDQGRLTVEPGTSSANTAPKIPSDIVFEQSPDQLLNALLPLYLQNQLLRCLQESAASELASRMTAMNNASDNAKELAKTLTLDYNKARQAAITQEILEVVGGSAAAGG</sequence>
<proteinExistence type="inferred from homology"/>
<organism>
    <name type="scientific">Synechococcus sp. (strain CC9902)</name>
    <dbReference type="NCBI Taxonomy" id="316279"/>
    <lineage>
        <taxon>Bacteria</taxon>
        <taxon>Bacillati</taxon>
        <taxon>Cyanobacteriota</taxon>
        <taxon>Cyanophyceae</taxon>
        <taxon>Synechococcales</taxon>
        <taxon>Synechococcaceae</taxon>
        <taxon>Synechococcus</taxon>
    </lineage>
</organism>
<comment type="function">
    <text evidence="1">Produces ATP from ADP in the presence of a proton gradient across the membrane. The gamma chain is believed to be important in regulating ATPase activity and the flow of protons through the CF(0) complex.</text>
</comment>
<comment type="subunit">
    <text evidence="1">F-type ATPases have 2 components, CF(1) - the catalytic core - and CF(0) - the membrane proton channel. CF(1) has five subunits: alpha(3), beta(3), gamma(1), delta(1), epsilon(1). CF(0) has three main subunits: a, b and c.</text>
</comment>
<comment type="subcellular location">
    <subcellularLocation>
        <location evidence="1">Cellular thylakoid membrane</location>
        <topology evidence="1">Peripheral membrane protein</topology>
    </subcellularLocation>
</comment>
<comment type="similarity">
    <text evidence="1">Belongs to the ATPase gamma chain family.</text>
</comment>
<dbReference type="EMBL" id="CP000097">
    <property type="protein sequence ID" value="ABB25457.1"/>
    <property type="molecule type" value="Genomic_DNA"/>
</dbReference>
<dbReference type="RefSeq" id="WP_011359306.1">
    <property type="nucleotide sequence ID" value="NC_007513.1"/>
</dbReference>
<dbReference type="SMR" id="Q3AZM0"/>
<dbReference type="STRING" id="316279.Syncc9902_0489"/>
<dbReference type="KEGG" id="sye:Syncc9902_0489"/>
<dbReference type="eggNOG" id="COG0224">
    <property type="taxonomic scope" value="Bacteria"/>
</dbReference>
<dbReference type="HOGENOM" id="CLU_050669_0_0_3"/>
<dbReference type="OrthoDB" id="9812769at2"/>
<dbReference type="Proteomes" id="UP000002712">
    <property type="component" value="Chromosome"/>
</dbReference>
<dbReference type="GO" id="GO:0031676">
    <property type="term" value="C:plasma membrane-derived thylakoid membrane"/>
    <property type="evidence" value="ECO:0007669"/>
    <property type="project" value="UniProtKB-SubCell"/>
</dbReference>
<dbReference type="GO" id="GO:0045259">
    <property type="term" value="C:proton-transporting ATP synthase complex"/>
    <property type="evidence" value="ECO:0007669"/>
    <property type="project" value="UniProtKB-KW"/>
</dbReference>
<dbReference type="GO" id="GO:0005524">
    <property type="term" value="F:ATP binding"/>
    <property type="evidence" value="ECO:0007669"/>
    <property type="project" value="UniProtKB-UniRule"/>
</dbReference>
<dbReference type="GO" id="GO:0046933">
    <property type="term" value="F:proton-transporting ATP synthase activity, rotational mechanism"/>
    <property type="evidence" value="ECO:0007669"/>
    <property type="project" value="UniProtKB-UniRule"/>
</dbReference>
<dbReference type="CDD" id="cd12151">
    <property type="entry name" value="F1-ATPase_gamma"/>
    <property type="match status" value="1"/>
</dbReference>
<dbReference type="FunFam" id="3.40.1380.10:FF:000006">
    <property type="entry name" value="ATP synthase gamma chain"/>
    <property type="match status" value="1"/>
</dbReference>
<dbReference type="FunFam" id="1.10.287.80:FF:000003">
    <property type="entry name" value="ATP synthase gamma chain, chloroplastic"/>
    <property type="match status" value="1"/>
</dbReference>
<dbReference type="Gene3D" id="3.40.1380.10">
    <property type="match status" value="1"/>
</dbReference>
<dbReference type="Gene3D" id="1.10.287.80">
    <property type="entry name" value="ATP synthase, gamma subunit, helix hairpin domain"/>
    <property type="match status" value="2"/>
</dbReference>
<dbReference type="HAMAP" id="MF_00815">
    <property type="entry name" value="ATP_synth_gamma_bact"/>
    <property type="match status" value="1"/>
</dbReference>
<dbReference type="InterPro" id="IPR035968">
    <property type="entry name" value="ATP_synth_F1_ATPase_gsu"/>
</dbReference>
<dbReference type="InterPro" id="IPR000131">
    <property type="entry name" value="ATP_synth_F1_gsu"/>
</dbReference>
<dbReference type="NCBIfam" id="TIGR01146">
    <property type="entry name" value="ATPsyn_F1gamma"/>
    <property type="match status" value="1"/>
</dbReference>
<dbReference type="NCBIfam" id="NF004145">
    <property type="entry name" value="PRK05621.1-2"/>
    <property type="match status" value="1"/>
</dbReference>
<dbReference type="PANTHER" id="PTHR11693">
    <property type="entry name" value="ATP SYNTHASE GAMMA CHAIN"/>
    <property type="match status" value="1"/>
</dbReference>
<dbReference type="PANTHER" id="PTHR11693:SF41">
    <property type="entry name" value="ATP SYNTHASE GAMMA CHAIN, CHLOROPLASTIC"/>
    <property type="match status" value="1"/>
</dbReference>
<dbReference type="Pfam" id="PF00231">
    <property type="entry name" value="ATP-synt"/>
    <property type="match status" value="1"/>
</dbReference>
<dbReference type="PRINTS" id="PR00126">
    <property type="entry name" value="ATPASEGAMMA"/>
</dbReference>
<dbReference type="SUPFAM" id="SSF52943">
    <property type="entry name" value="ATP synthase (F1-ATPase), gamma subunit"/>
    <property type="match status" value="1"/>
</dbReference>
<gene>
    <name evidence="1" type="primary">atpG</name>
    <name evidence="1" type="synonym">atpC</name>
    <name type="ordered locus">Syncc9902_0489</name>
</gene>
<reference key="1">
    <citation type="submission" date="2005-08" db="EMBL/GenBank/DDBJ databases">
        <title>Complete sequence of Synechococcus sp. CC9902.</title>
        <authorList>
            <person name="Copeland A."/>
            <person name="Lucas S."/>
            <person name="Lapidus A."/>
            <person name="Barry K."/>
            <person name="Detter J.C."/>
            <person name="Glavina T."/>
            <person name="Hammon N."/>
            <person name="Israni S."/>
            <person name="Pitluck S."/>
            <person name="Martinez M."/>
            <person name="Schmutz J."/>
            <person name="Larimer F."/>
            <person name="Land M."/>
            <person name="Kyrpides N."/>
            <person name="Ivanova N."/>
            <person name="Richardson P."/>
        </authorList>
    </citation>
    <scope>NUCLEOTIDE SEQUENCE [LARGE SCALE GENOMIC DNA]</scope>
    <source>
        <strain>CC9902</strain>
    </source>
</reference>
<feature type="chain" id="PRO_1000053367" description="ATP synthase gamma chain">
    <location>
        <begin position="1"/>
        <end position="317"/>
    </location>
</feature>
<evidence type="ECO:0000255" key="1">
    <source>
        <dbReference type="HAMAP-Rule" id="MF_00815"/>
    </source>
</evidence>
<protein>
    <recommendedName>
        <fullName evidence="1">ATP synthase gamma chain</fullName>
    </recommendedName>
    <alternativeName>
        <fullName evidence="1">ATP synthase F1 sector gamma subunit</fullName>
    </alternativeName>
    <alternativeName>
        <fullName evidence="1">F-ATPase gamma subunit</fullName>
    </alternativeName>
</protein>
<accession>Q3AZM0</accession>